<sequence>MDWLLDVFATWLYGLKVIAITLAVIMFISGLDDFFIDVVYWVRRIKRKLSVYRRYPRMSYRELYKPDEKPLAIMVPAWNETGVIGNMAELAATTLDYENYHIFVGTYPNDPDTQRDVDEVCARFPNVHKVVCARPGPTSKADCLNNVLDAITQFERSANFAFAGFILHDAEDVISPMELRLFNYLVERKDLIQIPVYPFEREWTHFTSMTYIDEFSELHGKDVPVREALAGQVPSAGVGTCFSRRAVTALLADGDGIAFDVQSLTEDYDIGFRLKEKGMTEIFVRFPVVDEAKEREQRKFLQHARTSNMICVREYFPDTFSTAVRQKSRWIIGIVFQGFKTHKWTSSLTLNYFLWRDRKGAISNFVSFLAMLVMIQLLLLLAYESLWPDAWHFLSIFSGSAWLMTLLWLNFGLMVNRIVQRVIFVTGYYGLTQGLLSVLRLFWGNLINFMANWRALKQVLQHGDPRRVAWDKTTHDFPSVTGDTRSLRPLGQILLENQVITEEQLDTALRNRVEGLRLGGSMLMQGLISAEQLAQALAEQNGVAWESIDAWQIPSSLIAEMPASVALHYAVLPLRLENDELIVGSEDGIDPVSLAALTRKVGRKVRYVIVLRGQIVTGLRHWYARRRGHDPRAMLYNAVQHQWLTEQQAGEIWRQYVPHQFLFAEILTTLGHINRSAINVLLLRHERSSLPLGKFLVTEGVISQETLDRVLTIQRELQVSMQSLLLKAGLNTEQVAQLESENEGE</sequence>
<comment type="function">
    <text evidence="1">Required for bacteriophage N4 adsorption. May be a component of the phage receptor (By similarity).</text>
</comment>
<comment type="subcellular location">
    <subcellularLocation>
        <location evidence="1">Cell inner membrane</location>
        <topology evidence="1">Multi-pass membrane protein</topology>
    </subcellularLocation>
</comment>
<reference key="1">
    <citation type="journal article" date="2001" name="Nature">
        <title>Genome sequence of enterohaemorrhagic Escherichia coli O157:H7.</title>
        <authorList>
            <person name="Perna N.T."/>
            <person name="Plunkett G. III"/>
            <person name="Burland V."/>
            <person name="Mau B."/>
            <person name="Glasner J.D."/>
            <person name="Rose D.J."/>
            <person name="Mayhew G.F."/>
            <person name="Evans P.S."/>
            <person name="Gregor J."/>
            <person name="Kirkpatrick H.A."/>
            <person name="Posfai G."/>
            <person name="Hackett J."/>
            <person name="Klink S."/>
            <person name="Boutin A."/>
            <person name="Shao Y."/>
            <person name="Miller L."/>
            <person name="Grotbeck E.J."/>
            <person name="Davis N.W."/>
            <person name="Lim A."/>
            <person name="Dimalanta E.T."/>
            <person name="Potamousis K."/>
            <person name="Apodaca J."/>
            <person name="Anantharaman T.S."/>
            <person name="Lin J."/>
            <person name="Yen G."/>
            <person name="Schwartz D.C."/>
            <person name="Welch R.A."/>
            <person name="Blattner F.R."/>
        </authorList>
    </citation>
    <scope>NUCLEOTIDE SEQUENCE [LARGE SCALE GENOMIC DNA]</scope>
    <source>
        <strain>O157:H7 / EDL933 / ATCC 700927 / EHEC</strain>
    </source>
</reference>
<reference key="2">
    <citation type="journal article" date="2001" name="DNA Res.">
        <title>Complete genome sequence of enterohemorrhagic Escherichia coli O157:H7 and genomic comparison with a laboratory strain K-12.</title>
        <authorList>
            <person name="Hayashi T."/>
            <person name="Makino K."/>
            <person name="Ohnishi M."/>
            <person name="Kurokawa K."/>
            <person name="Ishii K."/>
            <person name="Yokoyama K."/>
            <person name="Han C.-G."/>
            <person name="Ohtsubo E."/>
            <person name="Nakayama K."/>
            <person name="Murata T."/>
            <person name="Tanaka M."/>
            <person name="Tobe T."/>
            <person name="Iida T."/>
            <person name="Takami H."/>
            <person name="Honda T."/>
            <person name="Sasakawa C."/>
            <person name="Ogasawara N."/>
            <person name="Yasunaga T."/>
            <person name="Kuhara S."/>
            <person name="Shiba T."/>
            <person name="Hattori M."/>
            <person name="Shinagawa H."/>
        </authorList>
    </citation>
    <scope>NUCLEOTIDE SEQUENCE [LARGE SCALE GENOMIC DNA]</scope>
    <source>
        <strain>O157:H7 / Sakai / RIMD 0509952 / EHEC</strain>
    </source>
</reference>
<accession>P0AFA6</accession>
<accession>P31599</accession>
<protein>
    <recommendedName>
        <fullName>Bacteriophage N4 adsorption protein B</fullName>
    </recommendedName>
</protein>
<dbReference type="EMBL" id="AE005174">
    <property type="protein sequence ID" value="AAG54896.1"/>
    <property type="molecule type" value="Genomic_DNA"/>
</dbReference>
<dbReference type="EMBL" id="BA000007">
    <property type="protein sequence ID" value="BAB34024.1"/>
    <property type="molecule type" value="Genomic_DNA"/>
</dbReference>
<dbReference type="PIR" id="A90704">
    <property type="entry name" value="A90704"/>
</dbReference>
<dbReference type="PIR" id="D85554">
    <property type="entry name" value="D85554"/>
</dbReference>
<dbReference type="RefSeq" id="NP_308628.1">
    <property type="nucleotide sequence ID" value="NC_002695.1"/>
</dbReference>
<dbReference type="SMR" id="P0AFA6"/>
<dbReference type="STRING" id="155864.Z0699"/>
<dbReference type="GeneID" id="916959"/>
<dbReference type="KEGG" id="ece:Z0699"/>
<dbReference type="KEGG" id="ecs:ECs_0601"/>
<dbReference type="PATRIC" id="fig|386585.9.peg.708"/>
<dbReference type="eggNOG" id="COG1215">
    <property type="taxonomic scope" value="Bacteria"/>
</dbReference>
<dbReference type="HOGENOM" id="CLU_019733_1_0_6"/>
<dbReference type="OMA" id="KTMHDFP"/>
<dbReference type="Proteomes" id="UP000000558">
    <property type="component" value="Chromosome"/>
</dbReference>
<dbReference type="Proteomes" id="UP000002519">
    <property type="component" value="Chromosome"/>
</dbReference>
<dbReference type="GO" id="GO:0005886">
    <property type="term" value="C:plasma membrane"/>
    <property type="evidence" value="ECO:0007669"/>
    <property type="project" value="UniProtKB-SubCell"/>
</dbReference>
<dbReference type="GO" id="GO:0016887">
    <property type="term" value="F:ATP hydrolysis activity"/>
    <property type="evidence" value="ECO:0007669"/>
    <property type="project" value="TreeGrafter"/>
</dbReference>
<dbReference type="FunFam" id="3.30.300.160:FF:000001">
    <property type="entry name" value="Bacteriophage N4 adsorption protein B"/>
    <property type="match status" value="1"/>
</dbReference>
<dbReference type="FunFam" id="3.90.550.10:FF:000103">
    <property type="entry name" value="Bacteriophage N4 adsorption protein B"/>
    <property type="match status" value="1"/>
</dbReference>
<dbReference type="Gene3D" id="3.90.550.10">
    <property type="entry name" value="Spore Coat Polysaccharide Biosynthesis Protein SpsA, Chain A"/>
    <property type="match status" value="1"/>
</dbReference>
<dbReference type="Gene3D" id="3.30.300.160">
    <property type="entry name" value="Type II secretion system, protein E, N-terminal domain"/>
    <property type="match status" value="1"/>
</dbReference>
<dbReference type="InterPro" id="IPR001173">
    <property type="entry name" value="Glyco_trans_2-like"/>
</dbReference>
<dbReference type="InterPro" id="IPR029044">
    <property type="entry name" value="Nucleotide-diphossugar_trans"/>
</dbReference>
<dbReference type="InterPro" id="IPR037257">
    <property type="entry name" value="T2SS_E_N_sf"/>
</dbReference>
<dbReference type="InterPro" id="IPR007831">
    <property type="entry name" value="T2SS_GspE_N"/>
</dbReference>
<dbReference type="NCBIfam" id="NF008411">
    <property type="entry name" value="PRK11234.1"/>
    <property type="match status" value="1"/>
</dbReference>
<dbReference type="NCBIfam" id="NF011305">
    <property type="entry name" value="PRK14716.1-3"/>
    <property type="match status" value="1"/>
</dbReference>
<dbReference type="NCBIfam" id="NF012033">
    <property type="entry name" value="PRK15489.1"/>
    <property type="match status" value="1"/>
</dbReference>
<dbReference type="PANTHER" id="PTHR30258:SF1">
    <property type="entry name" value="PROTEIN TRANSPORT PROTEIN HOFB HOMOLOG"/>
    <property type="match status" value="1"/>
</dbReference>
<dbReference type="PANTHER" id="PTHR30258">
    <property type="entry name" value="TYPE II SECRETION SYSTEM PROTEIN GSPE-RELATED"/>
    <property type="match status" value="1"/>
</dbReference>
<dbReference type="Pfam" id="PF13632">
    <property type="entry name" value="Glyco_trans_2_3"/>
    <property type="match status" value="1"/>
</dbReference>
<dbReference type="Pfam" id="PF05157">
    <property type="entry name" value="MshEN"/>
    <property type="match status" value="1"/>
</dbReference>
<dbReference type="SUPFAM" id="SSF160246">
    <property type="entry name" value="EspE N-terminal domain-like"/>
    <property type="match status" value="1"/>
</dbReference>
<dbReference type="SUPFAM" id="SSF53448">
    <property type="entry name" value="Nucleotide-diphospho-sugar transferases"/>
    <property type="match status" value="1"/>
</dbReference>
<feature type="chain" id="PRO_0000096797" description="Bacteriophage N4 adsorption protein B">
    <location>
        <begin position="1"/>
        <end position="745"/>
    </location>
</feature>
<feature type="transmembrane region" description="Helical" evidence="2">
    <location>
        <begin position="8"/>
        <end position="28"/>
    </location>
</feature>
<feature type="transmembrane region" description="Helical" evidence="2">
    <location>
        <begin position="362"/>
        <end position="382"/>
    </location>
</feature>
<feature type="transmembrane region" description="Helical" evidence="2">
    <location>
        <begin position="393"/>
        <end position="413"/>
    </location>
</feature>
<organism>
    <name type="scientific">Escherichia coli O157:H7</name>
    <dbReference type="NCBI Taxonomy" id="83334"/>
    <lineage>
        <taxon>Bacteria</taxon>
        <taxon>Pseudomonadati</taxon>
        <taxon>Pseudomonadota</taxon>
        <taxon>Gammaproteobacteria</taxon>
        <taxon>Enterobacterales</taxon>
        <taxon>Enterobacteriaceae</taxon>
        <taxon>Escherichia</taxon>
    </lineage>
</organism>
<gene>
    <name type="primary">nfrB</name>
    <name type="ordered locus">Z0699</name>
    <name type="ordered locus">ECs0601</name>
</gene>
<keyword id="KW-0997">Cell inner membrane</keyword>
<keyword id="KW-1003">Cell membrane</keyword>
<keyword id="KW-0472">Membrane</keyword>
<keyword id="KW-1185">Reference proteome</keyword>
<keyword id="KW-0812">Transmembrane</keyword>
<keyword id="KW-1133">Transmembrane helix</keyword>
<name>NFRB_ECO57</name>
<proteinExistence type="inferred from homology"/>
<evidence type="ECO:0000250" key="1"/>
<evidence type="ECO:0000255" key="2"/>